<evidence type="ECO:0000250" key="1"/>
<evidence type="ECO:0000255" key="2">
    <source>
        <dbReference type="PROSITE-ProRule" id="PRU00159"/>
    </source>
</evidence>
<evidence type="ECO:0000255" key="3">
    <source>
        <dbReference type="PROSITE-ProRule" id="PRU00618"/>
    </source>
</evidence>
<evidence type="ECO:0000255" key="4">
    <source>
        <dbReference type="PROSITE-ProRule" id="PRU10027"/>
    </source>
</evidence>
<evidence type="ECO:0000256" key="5">
    <source>
        <dbReference type="SAM" id="MobiDB-lite"/>
    </source>
</evidence>
<evidence type="ECO:0000305" key="6"/>
<organism>
    <name type="scientific">Debaryomyces hansenii (strain ATCC 36239 / CBS 767 / BCRC 21394 / JCM 1990 / NBRC 0083 / IGC 2968)</name>
    <name type="common">Yeast</name>
    <name type="synonym">Torulaspora hansenii</name>
    <dbReference type="NCBI Taxonomy" id="284592"/>
    <lineage>
        <taxon>Eukaryota</taxon>
        <taxon>Fungi</taxon>
        <taxon>Dikarya</taxon>
        <taxon>Ascomycota</taxon>
        <taxon>Saccharomycotina</taxon>
        <taxon>Pichiomycetes</taxon>
        <taxon>Debaryomycetaceae</taxon>
        <taxon>Debaryomyces</taxon>
    </lineage>
</organism>
<keyword id="KW-0067">ATP-binding</keyword>
<keyword id="KW-0418">Kinase</keyword>
<keyword id="KW-0547">Nucleotide-binding</keyword>
<keyword id="KW-0597">Phosphoprotein</keyword>
<keyword id="KW-1185">Reference proteome</keyword>
<keyword id="KW-0723">Serine/threonine-protein kinase</keyword>
<keyword id="KW-0808">Transferase</keyword>
<comment type="function">
    <text evidence="1">Protein kinase that seems to play a role in the regulation of cell morphogenesis and proliferation.</text>
</comment>
<comment type="catalytic activity">
    <reaction>
        <text>L-seryl-[protein] + ATP = O-phospho-L-seryl-[protein] + ADP + H(+)</text>
        <dbReference type="Rhea" id="RHEA:17989"/>
        <dbReference type="Rhea" id="RHEA-COMP:9863"/>
        <dbReference type="Rhea" id="RHEA-COMP:11604"/>
        <dbReference type="ChEBI" id="CHEBI:15378"/>
        <dbReference type="ChEBI" id="CHEBI:29999"/>
        <dbReference type="ChEBI" id="CHEBI:30616"/>
        <dbReference type="ChEBI" id="CHEBI:83421"/>
        <dbReference type="ChEBI" id="CHEBI:456216"/>
        <dbReference type="EC" id="2.7.11.1"/>
    </reaction>
</comment>
<comment type="catalytic activity">
    <reaction>
        <text>L-threonyl-[protein] + ATP = O-phospho-L-threonyl-[protein] + ADP + H(+)</text>
        <dbReference type="Rhea" id="RHEA:46608"/>
        <dbReference type="Rhea" id="RHEA-COMP:11060"/>
        <dbReference type="Rhea" id="RHEA-COMP:11605"/>
        <dbReference type="ChEBI" id="CHEBI:15378"/>
        <dbReference type="ChEBI" id="CHEBI:30013"/>
        <dbReference type="ChEBI" id="CHEBI:30616"/>
        <dbReference type="ChEBI" id="CHEBI:61977"/>
        <dbReference type="ChEBI" id="CHEBI:456216"/>
        <dbReference type="EC" id="2.7.11.1"/>
    </reaction>
</comment>
<comment type="similarity">
    <text evidence="6">Belongs to the protein kinase superfamily. STE Ser/Thr protein kinase family. COT1 subfamily.</text>
</comment>
<dbReference type="EC" id="2.7.11.1"/>
<dbReference type="EMBL" id="CR382138">
    <property type="protein sequence ID" value="CAG89275.2"/>
    <property type="molecule type" value="Genomic_DNA"/>
</dbReference>
<dbReference type="RefSeq" id="XP_460922.2">
    <property type="nucleotide sequence ID" value="XM_460922.1"/>
</dbReference>
<dbReference type="SMR" id="Q6BLJ9"/>
<dbReference type="FunCoup" id="Q6BLJ9">
    <property type="interactions" value="592"/>
</dbReference>
<dbReference type="STRING" id="284592.Q6BLJ9"/>
<dbReference type="GeneID" id="2904251"/>
<dbReference type="KEGG" id="dha:DEHA2F12848g"/>
<dbReference type="VEuPathDB" id="FungiDB:DEHA2F12848g"/>
<dbReference type="eggNOG" id="KOG0605">
    <property type="taxonomic scope" value="Eukaryota"/>
</dbReference>
<dbReference type="HOGENOM" id="CLU_000288_67_2_1"/>
<dbReference type="InParanoid" id="Q6BLJ9"/>
<dbReference type="OMA" id="KIINWQE"/>
<dbReference type="OrthoDB" id="3638488at2759"/>
<dbReference type="Proteomes" id="UP000000599">
    <property type="component" value="Chromosome F"/>
</dbReference>
<dbReference type="GO" id="GO:0005938">
    <property type="term" value="C:cell cortex"/>
    <property type="evidence" value="ECO:0007669"/>
    <property type="project" value="EnsemblFungi"/>
</dbReference>
<dbReference type="GO" id="GO:0005935">
    <property type="term" value="C:cellular bud neck"/>
    <property type="evidence" value="ECO:0007669"/>
    <property type="project" value="EnsemblFungi"/>
</dbReference>
<dbReference type="GO" id="GO:0005934">
    <property type="term" value="C:cellular bud tip"/>
    <property type="evidence" value="ECO:0007669"/>
    <property type="project" value="EnsemblFungi"/>
</dbReference>
<dbReference type="GO" id="GO:0000131">
    <property type="term" value="C:incipient cellular bud site"/>
    <property type="evidence" value="ECO:0007669"/>
    <property type="project" value="EnsemblFungi"/>
</dbReference>
<dbReference type="GO" id="GO:0043332">
    <property type="term" value="C:mating projection tip"/>
    <property type="evidence" value="ECO:0007669"/>
    <property type="project" value="EnsemblFungi"/>
</dbReference>
<dbReference type="GO" id="GO:0005634">
    <property type="term" value="C:nucleus"/>
    <property type="evidence" value="ECO:0007669"/>
    <property type="project" value="EnsemblFungi"/>
</dbReference>
<dbReference type="GO" id="GO:1902554">
    <property type="term" value="C:serine/threonine protein kinase complex"/>
    <property type="evidence" value="ECO:0007669"/>
    <property type="project" value="EnsemblFungi"/>
</dbReference>
<dbReference type="GO" id="GO:0005524">
    <property type="term" value="F:ATP binding"/>
    <property type="evidence" value="ECO:0007669"/>
    <property type="project" value="UniProtKB-KW"/>
</dbReference>
<dbReference type="GO" id="GO:0042802">
    <property type="term" value="F:identical protein binding"/>
    <property type="evidence" value="ECO:0007669"/>
    <property type="project" value="EnsemblFungi"/>
</dbReference>
<dbReference type="GO" id="GO:0106310">
    <property type="term" value="F:protein serine kinase activity"/>
    <property type="evidence" value="ECO:0007669"/>
    <property type="project" value="RHEA"/>
</dbReference>
<dbReference type="GO" id="GO:0004674">
    <property type="term" value="F:protein serine/threonine kinase activity"/>
    <property type="evidence" value="ECO:0007669"/>
    <property type="project" value="UniProtKB-KW"/>
</dbReference>
<dbReference type="GO" id="GO:0007118">
    <property type="term" value="P:budding cell apical bud growth"/>
    <property type="evidence" value="ECO:0007669"/>
    <property type="project" value="EnsemblFungi"/>
</dbReference>
<dbReference type="GO" id="GO:0030950">
    <property type="term" value="P:establishment or maintenance of actin cytoskeleton polarity"/>
    <property type="evidence" value="ECO:0007669"/>
    <property type="project" value="EnsemblFungi"/>
</dbReference>
<dbReference type="GO" id="GO:0030447">
    <property type="term" value="P:filamentous growth"/>
    <property type="evidence" value="ECO:0007669"/>
    <property type="project" value="UniProtKB-ARBA"/>
</dbReference>
<dbReference type="GO" id="GO:0060237">
    <property type="term" value="P:regulation of fungal-type cell wall organization"/>
    <property type="evidence" value="ECO:0007669"/>
    <property type="project" value="EnsemblFungi"/>
</dbReference>
<dbReference type="GO" id="GO:0050708">
    <property type="term" value="P:regulation of protein secretion"/>
    <property type="evidence" value="ECO:0007669"/>
    <property type="project" value="EnsemblFungi"/>
</dbReference>
<dbReference type="GO" id="GO:0000920">
    <property type="term" value="P:septum digestion after cytokinesis"/>
    <property type="evidence" value="ECO:0007669"/>
    <property type="project" value="EnsemblFungi"/>
</dbReference>
<dbReference type="CDD" id="cd21773">
    <property type="entry name" value="MobB_CBK1"/>
    <property type="match status" value="1"/>
</dbReference>
<dbReference type="CDD" id="cd05629">
    <property type="entry name" value="STKc_NDR_like_fungal"/>
    <property type="match status" value="1"/>
</dbReference>
<dbReference type="FunFam" id="1.10.510.10:FF:000086">
    <property type="entry name" value="Non-specific serine/threonine protein kinase"/>
    <property type="match status" value="1"/>
</dbReference>
<dbReference type="FunFam" id="1.10.510.10:FF:000828">
    <property type="entry name" value="Serine/threonine-protein kinase CBK1"/>
    <property type="match status" value="1"/>
</dbReference>
<dbReference type="FunFam" id="3.30.200.20:FF:000192">
    <property type="entry name" value="Serine/threonine-protein kinase cot-1"/>
    <property type="match status" value="1"/>
</dbReference>
<dbReference type="Gene3D" id="3.30.200.20">
    <property type="entry name" value="Phosphorylase Kinase, domain 1"/>
    <property type="match status" value="2"/>
</dbReference>
<dbReference type="Gene3D" id="1.10.510.10">
    <property type="entry name" value="Transferase(Phosphotransferase) domain 1"/>
    <property type="match status" value="1"/>
</dbReference>
<dbReference type="InterPro" id="IPR000961">
    <property type="entry name" value="AGC-kinase_C"/>
</dbReference>
<dbReference type="InterPro" id="IPR011009">
    <property type="entry name" value="Kinase-like_dom_sf"/>
</dbReference>
<dbReference type="InterPro" id="IPR000719">
    <property type="entry name" value="Prot_kinase_dom"/>
</dbReference>
<dbReference type="InterPro" id="IPR017441">
    <property type="entry name" value="Protein_kinase_ATP_BS"/>
</dbReference>
<dbReference type="InterPro" id="IPR050839">
    <property type="entry name" value="Rho-assoc_Ser/Thr_Kinase"/>
</dbReference>
<dbReference type="InterPro" id="IPR008271">
    <property type="entry name" value="Ser/Thr_kinase_AS"/>
</dbReference>
<dbReference type="PANTHER" id="PTHR22988:SF76">
    <property type="entry name" value="CHROMOSOME UNDETERMINED SCAFFOLD_135, WHOLE GENOME SHOTGUN SEQUENCE"/>
    <property type="match status" value="1"/>
</dbReference>
<dbReference type="PANTHER" id="PTHR22988">
    <property type="entry name" value="MYOTONIC DYSTROPHY S/T KINASE-RELATED"/>
    <property type="match status" value="1"/>
</dbReference>
<dbReference type="Pfam" id="PF00069">
    <property type="entry name" value="Pkinase"/>
    <property type="match status" value="2"/>
</dbReference>
<dbReference type="SMART" id="SM00133">
    <property type="entry name" value="S_TK_X"/>
    <property type="match status" value="1"/>
</dbReference>
<dbReference type="SMART" id="SM00220">
    <property type="entry name" value="S_TKc"/>
    <property type="match status" value="1"/>
</dbReference>
<dbReference type="SUPFAM" id="SSF56112">
    <property type="entry name" value="Protein kinase-like (PK-like)"/>
    <property type="match status" value="1"/>
</dbReference>
<dbReference type="PROSITE" id="PS51285">
    <property type="entry name" value="AGC_KINASE_CTER"/>
    <property type="match status" value="1"/>
</dbReference>
<dbReference type="PROSITE" id="PS00107">
    <property type="entry name" value="PROTEIN_KINASE_ATP"/>
    <property type="match status" value="1"/>
</dbReference>
<dbReference type="PROSITE" id="PS50011">
    <property type="entry name" value="PROTEIN_KINASE_DOM"/>
    <property type="match status" value="1"/>
</dbReference>
<dbReference type="PROSITE" id="PS00108">
    <property type="entry name" value="PROTEIN_KINASE_ST"/>
    <property type="match status" value="1"/>
</dbReference>
<feature type="chain" id="PRO_0000085693" description="Serine/threonine-protein kinase CBK1">
    <location>
        <begin position="1"/>
        <end position="716"/>
    </location>
</feature>
<feature type="domain" description="Protein kinase" evidence="2">
    <location>
        <begin position="315"/>
        <end position="634"/>
    </location>
</feature>
<feature type="domain" description="AGC-kinase C-terminal" evidence="3">
    <location>
        <begin position="635"/>
        <end position="714"/>
    </location>
</feature>
<feature type="region of interest" description="Disordered" evidence="5">
    <location>
        <begin position="22"/>
        <end position="78"/>
    </location>
</feature>
<feature type="region of interest" description="Disordered" evidence="5">
    <location>
        <begin position="128"/>
        <end position="154"/>
    </location>
</feature>
<feature type="region of interest" description="Disordered" evidence="5">
    <location>
        <begin position="176"/>
        <end position="223"/>
    </location>
</feature>
<feature type="compositionally biased region" description="Low complexity" evidence="5">
    <location>
        <begin position="22"/>
        <end position="54"/>
    </location>
</feature>
<feature type="compositionally biased region" description="Polar residues" evidence="5">
    <location>
        <begin position="62"/>
        <end position="78"/>
    </location>
</feature>
<feature type="compositionally biased region" description="Polar residues" evidence="5">
    <location>
        <begin position="130"/>
        <end position="150"/>
    </location>
</feature>
<feature type="compositionally biased region" description="Polar residues" evidence="5">
    <location>
        <begin position="180"/>
        <end position="195"/>
    </location>
</feature>
<feature type="compositionally biased region" description="Low complexity" evidence="5">
    <location>
        <begin position="196"/>
        <end position="212"/>
    </location>
</feature>
<feature type="active site" description="Proton acceptor" evidence="2 4">
    <location>
        <position position="438"/>
    </location>
</feature>
<feature type="binding site" evidence="2">
    <location>
        <begin position="321"/>
        <end position="329"/>
    </location>
    <ligand>
        <name>ATP</name>
        <dbReference type="ChEBI" id="CHEBI:30616"/>
    </ligand>
</feature>
<feature type="binding site" evidence="2">
    <location>
        <position position="344"/>
    </location>
    <ligand>
        <name>ATP</name>
        <dbReference type="ChEBI" id="CHEBI:30616"/>
    </ligand>
</feature>
<name>CBK1_DEBHA</name>
<reference key="1">
    <citation type="journal article" date="2004" name="Nature">
        <title>Genome evolution in yeasts.</title>
        <authorList>
            <person name="Dujon B."/>
            <person name="Sherman D."/>
            <person name="Fischer G."/>
            <person name="Durrens P."/>
            <person name="Casaregola S."/>
            <person name="Lafontaine I."/>
            <person name="de Montigny J."/>
            <person name="Marck C."/>
            <person name="Neuveglise C."/>
            <person name="Talla E."/>
            <person name="Goffard N."/>
            <person name="Frangeul L."/>
            <person name="Aigle M."/>
            <person name="Anthouard V."/>
            <person name="Babour A."/>
            <person name="Barbe V."/>
            <person name="Barnay S."/>
            <person name="Blanchin S."/>
            <person name="Beckerich J.-M."/>
            <person name="Beyne E."/>
            <person name="Bleykasten C."/>
            <person name="Boisrame A."/>
            <person name="Boyer J."/>
            <person name="Cattolico L."/>
            <person name="Confanioleri F."/>
            <person name="de Daruvar A."/>
            <person name="Despons L."/>
            <person name="Fabre E."/>
            <person name="Fairhead C."/>
            <person name="Ferry-Dumazet H."/>
            <person name="Groppi A."/>
            <person name="Hantraye F."/>
            <person name="Hennequin C."/>
            <person name="Jauniaux N."/>
            <person name="Joyet P."/>
            <person name="Kachouri R."/>
            <person name="Kerrest A."/>
            <person name="Koszul R."/>
            <person name="Lemaire M."/>
            <person name="Lesur I."/>
            <person name="Ma L."/>
            <person name="Muller H."/>
            <person name="Nicaud J.-M."/>
            <person name="Nikolski M."/>
            <person name="Oztas S."/>
            <person name="Ozier-Kalogeropoulos O."/>
            <person name="Pellenz S."/>
            <person name="Potier S."/>
            <person name="Richard G.-F."/>
            <person name="Straub M.-L."/>
            <person name="Suleau A."/>
            <person name="Swennen D."/>
            <person name="Tekaia F."/>
            <person name="Wesolowski-Louvel M."/>
            <person name="Westhof E."/>
            <person name="Wirth B."/>
            <person name="Zeniou-Meyer M."/>
            <person name="Zivanovic Y."/>
            <person name="Bolotin-Fukuhara M."/>
            <person name="Thierry A."/>
            <person name="Bouchier C."/>
            <person name="Caudron B."/>
            <person name="Scarpelli C."/>
            <person name="Gaillardin C."/>
            <person name="Weissenbach J."/>
            <person name="Wincker P."/>
            <person name="Souciet J.-L."/>
        </authorList>
    </citation>
    <scope>NUCLEOTIDE SEQUENCE [LARGE SCALE GENOMIC DNA]</scope>
    <source>
        <strain>ATCC 36239 / CBS 767 / BCRC 21394 / JCM 1990 / NBRC 0083 / IGC 2968</strain>
    </source>
</reference>
<protein>
    <recommendedName>
        <fullName>Serine/threonine-protein kinase CBK1</fullName>
        <ecNumber>2.7.11.1</ecNumber>
    </recommendedName>
</protein>
<accession>Q6BLJ9</accession>
<sequence>MNYDYLTDEQKQQLYFHQMQAEQQQHQQQLHYKQQQHIQQQQQHQQNQQNQQQQPQPPRQPFSTFLQNNGSNSDLPQMGTFQQDLQRQNIPNLRFSQQNQPSDLGQEFQDDDSFMDEDLTEIHEQPPMQELNSSPMTHPHSFQQNFQTPTKNDDANLRNQQFQSVDSERSLDFKPPVTFTKLNNNSNADLSSPTESSFLKSNLNLPNSNIPPAGASNDPNAQKSNYIYFNRQPNSLNKIAQDKASSIKLKLENYYQMSVAHAIERNQRRLDLEHKLLNEESGSSEERKNRQLQNLGKKESQFLRLRRTKLSLEDFNTVKVIGKGAFGEVRLVQKRDTGKIYAMKTLLKSEMYKKDQLAHVKAERDVLAGSDSPWVVSLYYSFQDAQYLYLIMEFLPGGDLMTMLIRWQIFTEDITRFYMAECVLAIEAIHKLGFIHRDIKPDNILIDIRGHIKLSDFGLSTGFHKTHDSNYYKKLLEKENPHHTNPQNGNLQAPSMATNNRNSMMVDAIHLTMSNRQQMQTWRKSRRLMAYSTVGTPDYIAPEIFVHQGYGQECDWWSLGAIMFECLIGWPPFCSETPHETYRKILNWQETLQIPDDIHLSPESEDLIRKLLTNAENRLGRYNGADELKSHPFFRGVDWDTIRKVDAPFIPKLRSITDTRFFPTDELENVPDSPALSKAMEQRDQVLQNGGNVKEDLPFIGYTYSRFDYLTRKNAL</sequence>
<gene>
    <name type="primary">CBK1</name>
    <name type="ordered locus">DEHA2F12848g</name>
</gene>
<proteinExistence type="inferred from homology"/>